<comment type="subcellular location">
    <subcellularLocation>
        <location evidence="4">Secreted</location>
    </subcellularLocation>
</comment>
<comment type="tissue specificity">
    <text evidence="4">Expressed by the venom gland.</text>
</comment>
<comment type="PTM">
    <text evidence="3">Contains 5 disulfide bonds.</text>
</comment>
<comment type="similarity">
    <text evidence="3">Belongs to the scoloptoxin-11 family.</text>
</comment>
<comment type="online information" name="National Center for Biotechnology Information (NCBI)">
    <link uri="https://www.ncbi.nlm.nih.gov/nuccore/GASK01000036"/>
</comment>
<dbReference type="GO" id="GO:0005576">
    <property type="term" value="C:extracellular region"/>
    <property type="evidence" value="ECO:0007669"/>
    <property type="project" value="UniProtKB-SubCell"/>
</dbReference>
<dbReference type="GO" id="GO:0090729">
    <property type="term" value="F:toxin activity"/>
    <property type="evidence" value="ECO:0007669"/>
    <property type="project" value="UniProtKB-KW"/>
</dbReference>
<protein>
    <recommendedName>
        <fullName evidence="2">U-scoloptoxin(11)-Sa1a</fullName>
        <shortName evidence="2">U-SLPTX(11)-Sa1a</shortName>
    </recommendedName>
</protein>
<sequence length="132" mass="14854">MIRFFAFVLFFATQELILCNNLPCDASDIAYEEITTQAGTQTNTFCDCQTETYKFSTGTSTDKQTTTVKYKCKKIRACVYAQKCGSLDVKPEENVLSTFCTCADGQVCHDTPEYADETRTFGDTKYHSFVCT</sequence>
<proteinExistence type="evidence at transcript level"/>
<keyword id="KW-1015">Disulfide bond</keyword>
<keyword id="KW-0964">Secreted</keyword>
<keyword id="KW-0732">Signal</keyword>
<keyword id="KW-0800">Toxin</keyword>
<reference key="1">
    <citation type="journal article" date="2014" name="Mol. Biol. Evol.">
        <title>Clawing through evolution: toxin diversification and convergence in the ancient lineage Chilopoda (centipedes).</title>
        <authorList>
            <person name="Undheim E.A."/>
            <person name="Jones A."/>
            <person name="Clauser K.R."/>
            <person name="Holland J.W."/>
            <person name="Pineda S.S."/>
            <person name="King G.F."/>
            <person name="Fry B.G."/>
        </authorList>
    </citation>
    <scope>NUCLEOTIDE SEQUENCE [MRNA]</scope>
    <scope>NOMENCLATURE</scope>
    <source>
        <tissue>Venom gland</tissue>
    </source>
</reference>
<feature type="signal peptide" evidence="1">
    <location>
        <begin position="1"/>
        <end position="19"/>
    </location>
</feature>
<feature type="chain" id="PRO_0000446760" description="U-scoloptoxin(11)-Sa1a" evidence="3">
    <location>
        <begin position="20"/>
        <end position="132"/>
    </location>
</feature>
<evidence type="ECO:0000255" key="1"/>
<evidence type="ECO:0000303" key="2">
    <source>
    </source>
</evidence>
<evidence type="ECO:0000305" key="3"/>
<evidence type="ECO:0000305" key="4">
    <source>
    </source>
</evidence>
<name>TXB1A_SCOAL</name>
<organism>
    <name type="scientific">Scolopendra alternans</name>
    <name type="common">Florida Keys giant centipede</name>
    <dbReference type="NCBI Taxonomy" id="1329349"/>
    <lineage>
        <taxon>Eukaryota</taxon>
        <taxon>Metazoa</taxon>
        <taxon>Ecdysozoa</taxon>
        <taxon>Arthropoda</taxon>
        <taxon>Myriapoda</taxon>
        <taxon>Chilopoda</taxon>
        <taxon>Pleurostigmophora</taxon>
        <taxon>Scolopendromorpha</taxon>
        <taxon>Scolopendridae</taxon>
        <taxon>Scolopendra</taxon>
    </lineage>
</organism>
<accession>P0DPZ5</accession>